<gene>
    <name evidence="1" type="primary">prfA</name>
    <name type="ordered locus">SeSA_A1913</name>
</gene>
<proteinExistence type="inferred from homology"/>
<dbReference type="EMBL" id="CP001127">
    <property type="protein sequence ID" value="ACF91269.1"/>
    <property type="molecule type" value="Genomic_DNA"/>
</dbReference>
<dbReference type="RefSeq" id="WP_000804708.1">
    <property type="nucleotide sequence ID" value="NC_011094.1"/>
</dbReference>
<dbReference type="SMR" id="B4TXU2"/>
<dbReference type="KEGG" id="sew:SeSA_A1913"/>
<dbReference type="HOGENOM" id="CLU_036856_0_1_6"/>
<dbReference type="Proteomes" id="UP000001865">
    <property type="component" value="Chromosome"/>
</dbReference>
<dbReference type="GO" id="GO:0005737">
    <property type="term" value="C:cytoplasm"/>
    <property type="evidence" value="ECO:0007669"/>
    <property type="project" value="UniProtKB-SubCell"/>
</dbReference>
<dbReference type="GO" id="GO:0016149">
    <property type="term" value="F:translation release factor activity, codon specific"/>
    <property type="evidence" value="ECO:0007669"/>
    <property type="project" value="UniProtKB-UniRule"/>
</dbReference>
<dbReference type="FunFam" id="3.30.160.20:FF:000004">
    <property type="entry name" value="Peptide chain release factor 1"/>
    <property type="match status" value="1"/>
</dbReference>
<dbReference type="FunFam" id="3.30.70.1660:FF:000002">
    <property type="entry name" value="Peptide chain release factor 1"/>
    <property type="match status" value="1"/>
</dbReference>
<dbReference type="FunFam" id="3.30.70.1660:FF:000004">
    <property type="entry name" value="Peptide chain release factor 1"/>
    <property type="match status" value="1"/>
</dbReference>
<dbReference type="Gene3D" id="3.30.160.20">
    <property type="match status" value="1"/>
</dbReference>
<dbReference type="Gene3D" id="3.30.70.1660">
    <property type="match status" value="2"/>
</dbReference>
<dbReference type="Gene3D" id="6.10.140.1950">
    <property type="match status" value="1"/>
</dbReference>
<dbReference type="HAMAP" id="MF_00093">
    <property type="entry name" value="Rel_fac_1"/>
    <property type="match status" value="1"/>
</dbReference>
<dbReference type="InterPro" id="IPR005139">
    <property type="entry name" value="PCRF"/>
</dbReference>
<dbReference type="InterPro" id="IPR000352">
    <property type="entry name" value="Pep_chain_release_fac_I"/>
</dbReference>
<dbReference type="InterPro" id="IPR045853">
    <property type="entry name" value="Pep_chain_release_fac_I_sf"/>
</dbReference>
<dbReference type="InterPro" id="IPR050057">
    <property type="entry name" value="Prokaryotic/Mito_RF"/>
</dbReference>
<dbReference type="InterPro" id="IPR004373">
    <property type="entry name" value="RF-1"/>
</dbReference>
<dbReference type="NCBIfam" id="TIGR00019">
    <property type="entry name" value="prfA"/>
    <property type="match status" value="1"/>
</dbReference>
<dbReference type="NCBIfam" id="NF001859">
    <property type="entry name" value="PRK00591.1"/>
    <property type="match status" value="1"/>
</dbReference>
<dbReference type="PANTHER" id="PTHR43804">
    <property type="entry name" value="LD18447P"/>
    <property type="match status" value="1"/>
</dbReference>
<dbReference type="PANTHER" id="PTHR43804:SF7">
    <property type="entry name" value="LD18447P"/>
    <property type="match status" value="1"/>
</dbReference>
<dbReference type="Pfam" id="PF03462">
    <property type="entry name" value="PCRF"/>
    <property type="match status" value="1"/>
</dbReference>
<dbReference type="Pfam" id="PF00472">
    <property type="entry name" value="RF-1"/>
    <property type="match status" value="1"/>
</dbReference>
<dbReference type="SMART" id="SM00937">
    <property type="entry name" value="PCRF"/>
    <property type="match status" value="1"/>
</dbReference>
<dbReference type="SUPFAM" id="SSF75620">
    <property type="entry name" value="Release factor"/>
    <property type="match status" value="1"/>
</dbReference>
<dbReference type="PROSITE" id="PS00745">
    <property type="entry name" value="RF_PROK_I"/>
    <property type="match status" value="1"/>
</dbReference>
<keyword id="KW-0963">Cytoplasm</keyword>
<keyword id="KW-0488">Methylation</keyword>
<keyword id="KW-0648">Protein biosynthesis</keyword>
<organism>
    <name type="scientific">Salmonella schwarzengrund (strain CVM19633)</name>
    <dbReference type="NCBI Taxonomy" id="439843"/>
    <lineage>
        <taxon>Bacteria</taxon>
        <taxon>Pseudomonadati</taxon>
        <taxon>Pseudomonadota</taxon>
        <taxon>Gammaproteobacteria</taxon>
        <taxon>Enterobacterales</taxon>
        <taxon>Enterobacteriaceae</taxon>
        <taxon>Salmonella</taxon>
    </lineage>
</organism>
<protein>
    <recommendedName>
        <fullName evidence="1">Peptide chain release factor 1</fullName>
        <shortName evidence="1">RF-1</shortName>
    </recommendedName>
</protein>
<comment type="function">
    <text evidence="1">Peptide chain release factor 1 directs the termination of translation in response to the peptide chain termination codons UAG and UAA.</text>
</comment>
<comment type="subcellular location">
    <subcellularLocation>
        <location evidence="1">Cytoplasm</location>
    </subcellularLocation>
</comment>
<comment type="PTM">
    <text evidence="1">Methylated by PrmC. Methylation increases the termination efficiency of RF1.</text>
</comment>
<comment type="similarity">
    <text evidence="1">Belongs to the prokaryotic/mitochondrial release factor family.</text>
</comment>
<feature type="chain" id="PRO_1000093503" description="Peptide chain release factor 1">
    <location>
        <begin position="1"/>
        <end position="360"/>
    </location>
</feature>
<feature type="region of interest" description="Disordered" evidence="2">
    <location>
        <begin position="284"/>
        <end position="313"/>
    </location>
</feature>
<feature type="modified residue" description="N5-methylglutamine" evidence="1">
    <location>
        <position position="235"/>
    </location>
</feature>
<name>RF1_SALSV</name>
<reference key="1">
    <citation type="journal article" date="2011" name="J. Bacteriol.">
        <title>Comparative genomics of 28 Salmonella enterica isolates: evidence for CRISPR-mediated adaptive sublineage evolution.</title>
        <authorList>
            <person name="Fricke W.F."/>
            <person name="Mammel M.K."/>
            <person name="McDermott P.F."/>
            <person name="Tartera C."/>
            <person name="White D.G."/>
            <person name="Leclerc J.E."/>
            <person name="Ravel J."/>
            <person name="Cebula T.A."/>
        </authorList>
    </citation>
    <scope>NUCLEOTIDE SEQUENCE [LARGE SCALE GENOMIC DNA]</scope>
    <source>
        <strain>CVM19633</strain>
    </source>
</reference>
<accession>B4TXU2</accession>
<sequence>MKPSIVAKLEALHERHEEVQALLGDAGIIADQDRFRALSREYAQLSDVSRCFTDWQQVQDDIETAQMMLDDPEMREMAQEELREAKEKSEQLEQQLQVLLLPKDPDDERNAFLEVRAGTGGDEAALFAGDLFRMYSRYAESRRWRVEIMSMSEGEHGGYKEIIAKISGDGVYGRLKFESGGHRVQRVPATESQGRIHTSACTVAVMPELPEAELPDINPADLRIDTFRSSGAGGQHVNTTDSAIRITHLPTGIVVECQDERSQHKNKAKALSVLGARIHAAETAKRQQAEASTRRNLLGSGDRSDRNRTYNFPQGRVTDHRINLTLYRLDETMEGKLDMLIEPIVQEHQADLLAALSEQE</sequence>
<evidence type="ECO:0000255" key="1">
    <source>
        <dbReference type="HAMAP-Rule" id="MF_00093"/>
    </source>
</evidence>
<evidence type="ECO:0000256" key="2">
    <source>
        <dbReference type="SAM" id="MobiDB-lite"/>
    </source>
</evidence>